<organism>
    <name type="scientific">Cereibacter sphaeroides (strain KD131 / KCTC 12085)</name>
    <name type="common">Rhodobacter sphaeroides</name>
    <dbReference type="NCBI Taxonomy" id="557760"/>
    <lineage>
        <taxon>Bacteria</taxon>
        <taxon>Pseudomonadati</taxon>
        <taxon>Pseudomonadota</taxon>
        <taxon>Alphaproteobacteria</taxon>
        <taxon>Rhodobacterales</taxon>
        <taxon>Paracoccaceae</taxon>
        <taxon>Cereibacter</taxon>
    </lineage>
</organism>
<name>SUCC_CERSK</name>
<feature type="chain" id="PRO_1000197712" description="Succinate--CoA ligase [ADP-forming] subunit beta">
    <location>
        <begin position="1"/>
        <end position="397"/>
    </location>
</feature>
<feature type="domain" description="ATP-grasp" evidence="1">
    <location>
        <begin position="9"/>
        <end position="254"/>
    </location>
</feature>
<feature type="binding site" evidence="1">
    <location>
        <position position="46"/>
    </location>
    <ligand>
        <name>ATP</name>
        <dbReference type="ChEBI" id="CHEBI:30616"/>
    </ligand>
</feature>
<feature type="binding site" evidence="1">
    <location>
        <begin position="53"/>
        <end position="55"/>
    </location>
    <ligand>
        <name>ATP</name>
        <dbReference type="ChEBI" id="CHEBI:30616"/>
    </ligand>
</feature>
<feature type="binding site" evidence="1">
    <location>
        <position position="109"/>
    </location>
    <ligand>
        <name>ATP</name>
        <dbReference type="ChEBI" id="CHEBI:30616"/>
    </ligand>
</feature>
<feature type="binding site" evidence="1">
    <location>
        <position position="112"/>
    </location>
    <ligand>
        <name>ATP</name>
        <dbReference type="ChEBI" id="CHEBI:30616"/>
    </ligand>
</feature>
<feature type="binding site" evidence="1">
    <location>
        <position position="117"/>
    </location>
    <ligand>
        <name>ATP</name>
        <dbReference type="ChEBI" id="CHEBI:30616"/>
    </ligand>
</feature>
<feature type="binding site" evidence="1">
    <location>
        <position position="209"/>
    </location>
    <ligand>
        <name>Mg(2+)</name>
        <dbReference type="ChEBI" id="CHEBI:18420"/>
    </ligand>
</feature>
<feature type="binding site" evidence="1">
    <location>
        <position position="223"/>
    </location>
    <ligand>
        <name>Mg(2+)</name>
        <dbReference type="ChEBI" id="CHEBI:18420"/>
    </ligand>
</feature>
<feature type="binding site" evidence="1">
    <location>
        <position position="274"/>
    </location>
    <ligand>
        <name>substrate</name>
        <note>ligand shared with subunit alpha</note>
    </ligand>
</feature>
<feature type="binding site" evidence="1">
    <location>
        <begin position="331"/>
        <end position="333"/>
    </location>
    <ligand>
        <name>substrate</name>
        <note>ligand shared with subunit alpha</note>
    </ligand>
</feature>
<keyword id="KW-0067">ATP-binding</keyword>
<keyword id="KW-0436">Ligase</keyword>
<keyword id="KW-0460">Magnesium</keyword>
<keyword id="KW-0479">Metal-binding</keyword>
<keyword id="KW-0547">Nucleotide-binding</keyword>
<keyword id="KW-0816">Tricarboxylic acid cycle</keyword>
<comment type="function">
    <text evidence="1">Succinyl-CoA synthetase functions in the citric acid cycle (TCA), coupling the hydrolysis of succinyl-CoA to the synthesis of either ATP or GTP and thus represents the only step of substrate-level phosphorylation in the TCA. The beta subunit provides nucleotide specificity of the enzyme and binds the substrate succinate, while the binding sites for coenzyme A and phosphate are found in the alpha subunit.</text>
</comment>
<comment type="catalytic activity">
    <reaction evidence="1">
        <text>succinate + ATP + CoA = succinyl-CoA + ADP + phosphate</text>
        <dbReference type="Rhea" id="RHEA:17661"/>
        <dbReference type="ChEBI" id="CHEBI:30031"/>
        <dbReference type="ChEBI" id="CHEBI:30616"/>
        <dbReference type="ChEBI" id="CHEBI:43474"/>
        <dbReference type="ChEBI" id="CHEBI:57287"/>
        <dbReference type="ChEBI" id="CHEBI:57292"/>
        <dbReference type="ChEBI" id="CHEBI:456216"/>
        <dbReference type="EC" id="6.2.1.5"/>
    </reaction>
    <physiologicalReaction direction="right-to-left" evidence="1">
        <dbReference type="Rhea" id="RHEA:17663"/>
    </physiologicalReaction>
</comment>
<comment type="catalytic activity">
    <reaction evidence="1">
        <text>GTP + succinate + CoA = succinyl-CoA + GDP + phosphate</text>
        <dbReference type="Rhea" id="RHEA:22120"/>
        <dbReference type="ChEBI" id="CHEBI:30031"/>
        <dbReference type="ChEBI" id="CHEBI:37565"/>
        <dbReference type="ChEBI" id="CHEBI:43474"/>
        <dbReference type="ChEBI" id="CHEBI:57287"/>
        <dbReference type="ChEBI" id="CHEBI:57292"/>
        <dbReference type="ChEBI" id="CHEBI:58189"/>
    </reaction>
    <physiologicalReaction direction="right-to-left" evidence="1">
        <dbReference type="Rhea" id="RHEA:22122"/>
    </physiologicalReaction>
</comment>
<comment type="cofactor">
    <cofactor evidence="1">
        <name>Mg(2+)</name>
        <dbReference type="ChEBI" id="CHEBI:18420"/>
    </cofactor>
    <text evidence="1">Binds 1 Mg(2+) ion per subunit.</text>
</comment>
<comment type="pathway">
    <text evidence="1">Carbohydrate metabolism; tricarboxylic acid cycle; succinate from succinyl-CoA (ligase route): step 1/1.</text>
</comment>
<comment type="subunit">
    <text evidence="1">Heterotetramer of two alpha and two beta subunits.</text>
</comment>
<comment type="similarity">
    <text evidence="1">Belongs to the succinate/malate CoA ligase beta subunit family.</text>
</comment>
<protein>
    <recommendedName>
        <fullName evidence="1">Succinate--CoA ligase [ADP-forming] subunit beta</fullName>
        <ecNumber evidence="1">6.2.1.5</ecNumber>
    </recommendedName>
    <alternativeName>
        <fullName evidence="1">Succinyl-CoA synthetase subunit beta</fullName>
        <shortName evidence="1">SCS-beta</shortName>
    </alternativeName>
</protein>
<gene>
    <name evidence="1" type="primary">sucC</name>
    <name type="ordered locus">RSKD131_2359</name>
</gene>
<accession>B9KNB3</accession>
<reference key="1">
    <citation type="journal article" date="2009" name="J. Bacteriol.">
        <title>Complete genome sequence of Rhodobacter sphaeroides KD131.</title>
        <authorList>
            <person name="Lim S.-K."/>
            <person name="Kim S.J."/>
            <person name="Cha S.H."/>
            <person name="Oh Y.-K."/>
            <person name="Rhee H.-J."/>
            <person name="Kim M.-S."/>
            <person name="Lee J.K."/>
        </authorList>
    </citation>
    <scope>NUCLEOTIDE SEQUENCE [LARGE SCALE GENOMIC DNA]</scope>
    <source>
        <strain>KD131 / KCTC 12085</strain>
    </source>
</reference>
<sequence length="397" mass="42228">MNIHEYQAKALLRSYGAPVSDGRVVLKADEAKSAAGELGGPLWVVKAQIHAGGRGKGKFKEPEAGEKGGVRLAKSVGEAAELAKQMLGRTLVTHQTGPAGKQVNRIYIEEGSDIARELYLALLVDRGTSRISFVVSTEGGMDIEEVAASTPEKIVSFSVDPASGLSDFHGRRVAFALGLEGAQVKQCVQLVKNLYRAFVEKDMEMLEINPLIVMTDGNLKVLDAKVGFDNNALYRQSDVMALRDETEEDPKELAASKFDLNYIALDGEIGCMVNGAGLAMATMDIIKLYGAEPANFLDVGGGATKEKVTEAFKIITSDPNVKGILVNIFGGIMRCDIIAEGIIAAVKEVGLQVPLVVRLEGTNVEKGKEIIANSGLNVIAGDNLSDAAQKIVKAVKG</sequence>
<proteinExistence type="inferred from homology"/>
<evidence type="ECO:0000255" key="1">
    <source>
        <dbReference type="HAMAP-Rule" id="MF_00558"/>
    </source>
</evidence>
<dbReference type="EC" id="6.2.1.5" evidence="1"/>
<dbReference type="EMBL" id="CP001150">
    <property type="protein sequence ID" value="ACM02219.1"/>
    <property type="molecule type" value="Genomic_DNA"/>
</dbReference>
<dbReference type="RefSeq" id="WP_002721255.1">
    <property type="nucleotide sequence ID" value="NC_011963.1"/>
</dbReference>
<dbReference type="SMR" id="B9KNB3"/>
<dbReference type="GeneID" id="67447738"/>
<dbReference type="KEGG" id="rsk:RSKD131_2359"/>
<dbReference type="HOGENOM" id="CLU_037430_0_2_5"/>
<dbReference type="UniPathway" id="UPA00223">
    <property type="reaction ID" value="UER00999"/>
</dbReference>
<dbReference type="GO" id="GO:0005829">
    <property type="term" value="C:cytosol"/>
    <property type="evidence" value="ECO:0007669"/>
    <property type="project" value="TreeGrafter"/>
</dbReference>
<dbReference type="GO" id="GO:0042709">
    <property type="term" value="C:succinate-CoA ligase complex"/>
    <property type="evidence" value="ECO:0007669"/>
    <property type="project" value="TreeGrafter"/>
</dbReference>
<dbReference type="GO" id="GO:0005524">
    <property type="term" value="F:ATP binding"/>
    <property type="evidence" value="ECO:0007669"/>
    <property type="project" value="UniProtKB-UniRule"/>
</dbReference>
<dbReference type="GO" id="GO:0000287">
    <property type="term" value="F:magnesium ion binding"/>
    <property type="evidence" value="ECO:0007669"/>
    <property type="project" value="UniProtKB-UniRule"/>
</dbReference>
<dbReference type="GO" id="GO:0004775">
    <property type="term" value="F:succinate-CoA ligase (ADP-forming) activity"/>
    <property type="evidence" value="ECO:0007669"/>
    <property type="project" value="UniProtKB-UniRule"/>
</dbReference>
<dbReference type="GO" id="GO:0004776">
    <property type="term" value="F:succinate-CoA ligase (GDP-forming) activity"/>
    <property type="evidence" value="ECO:0007669"/>
    <property type="project" value="RHEA"/>
</dbReference>
<dbReference type="GO" id="GO:0006104">
    <property type="term" value="P:succinyl-CoA metabolic process"/>
    <property type="evidence" value="ECO:0007669"/>
    <property type="project" value="TreeGrafter"/>
</dbReference>
<dbReference type="GO" id="GO:0006099">
    <property type="term" value="P:tricarboxylic acid cycle"/>
    <property type="evidence" value="ECO:0007669"/>
    <property type="project" value="UniProtKB-UniRule"/>
</dbReference>
<dbReference type="FunFam" id="3.30.1490.20:FF:000002">
    <property type="entry name" value="Succinate--CoA ligase [ADP-forming] subunit beta"/>
    <property type="match status" value="1"/>
</dbReference>
<dbReference type="FunFam" id="3.30.470.20:FF:000002">
    <property type="entry name" value="Succinate--CoA ligase [ADP-forming] subunit beta"/>
    <property type="match status" value="1"/>
</dbReference>
<dbReference type="FunFam" id="3.40.50.261:FF:000001">
    <property type="entry name" value="Succinate--CoA ligase [ADP-forming] subunit beta"/>
    <property type="match status" value="1"/>
</dbReference>
<dbReference type="Gene3D" id="3.30.1490.20">
    <property type="entry name" value="ATP-grasp fold, A domain"/>
    <property type="match status" value="1"/>
</dbReference>
<dbReference type="Gene3D" id="3.30.470.20">
    <property type="entry name" value="ATP-grasp fold, B domain"/>
    <property type="match status" value="1"/>
</dbReference>
<dbReference type="Gene3D" id="3.40.50.261">
    <property type="entry name" value="Succinyl-CoA synthetase domains"/>
    <property type="match status" value="1"/>
</dbReference>
<dbReference type="HAMAP" id="MF_00558">
    <property type="entry name" value="Succ_CoA_beta"/>
    <property type="match status" value="1"/>
</dbReference>
<dbReference type="InterPro" id="IPR011761">
    <property type="entry name" value="ATP-grasp"/>
</dbReference>
<dbReference type="InterPro" id="IPR013650">
    <property type="entry name" value="ATP-grasp_succ-CoA_synth-type"/>
</dbReference>
<dbReference type="InterPro" id="IPR013815">
    <property type="entry name" value="ATP_grasp_subdomain_1"/>
</dbReference>
<dbReference type="InterPro" id="IPR017866">
    <property type="entry name" value="Succ-CoA_synthase_bsu_CS"/>
</dbReference>
<dbReference type="InterPro" id="IPR005811">
    <property type="entry name" value="SUCC_ACL_C"/>
</dbReference>
<dbReference type="InterPro" id="IPR005809">
    <property type="entry name" value="Succ_CoA_ligase-like_bsu"/>
</dbReference>
<dbReference type="InterPro" id="IPR016102">
    <property type="entry name" value="Succinyl-CoA_synth-like"/>
</dbReference>
<dbReference type="NCBIfam" id="NF001913">
    <property type="entry name" value="PRK00696.1"/>
    <property type="match status" value="1"/>
</dbReference>
<dbReference type="NCBIfam" id="TIGR01016">
    <property type="entry name" value="sucCoAbeta"/>
    <property type="match status" value="1"/>
</dbReference>
<dbReference type="PANTHER" id="PTHR11815:SF10">
    <property type="entry name" value="SUCCINATE--COA LIGASE [GDP-FORMING] SUBUNIT BETA, MITOCHONDRIAL"/>
    <property type="match status" value="1"/>
</dbReference>
<dbReference type="PANTHER" id="PTHR11815">
    <property type="entry name" value="SUCCINYL-COA SYNTHETASE BETA CHAIN"/>
    <property type="match status" value="1"/>
</dbReference>
<dbReference type="Pfam" id="PF08442">
    <property type="entry name" value="ATP-grasp_2"/>
    <property type="match status" value="1"/>
</dbReference>
<dbReference type="Pfam" id="PF00549">
    <property type="entry name" value="Ligase_CoA"/>
    <property type="match status" value="1"/>
</dbReference>
<dbReference type="PIRSF" id="PIRSF001554">
    <property type="entry name" value="SucCS_beta"/>
    <property type="match status" value="1"/>
</dbReference>
<dbReference type="SUPFAM" id="SSF56059">
    <property type="entry name" value="Glutathione synthetase ATP-binding domain-like"/>
    <property type="match status" value="1"/>
</dbReference>
<dbReference type="SUPFAM" id="SSF52210">
    <property type="entry name" value="Succinyl-CoA synthetase domains"/>
    <property type="match status" value="1"/>
</dbReference>
<dbReference type="PROSITE" id="PS50975">
    <property type="entry name" value="ATP_GRASP"/>
    <property type="match status" value="1"/>
</dbReference>
<dbReference type="PROSITE" id="PS01217">
    <property type="entry name" value="SUCCINYL_COA_LIG_3"/>
    <property type="match status" value="1"/>
</dbReference>